<organism>
    <name type="scientific">Synechococcus elongatus (strain ATCC 33912 / PCC 7942 / FACHB-805)</name>
    <name type="common">Anacystis nidulans R2</name>
    <dbReference type="NCBI Taxonomy" id="1140"/>
    <lineage>
        <taxon>Bacteria</taxon>
        <taxon>Bacillati</taxon>
        <taxon>Cyanobacteriota</taxon>
        <taxon>Cyanophyceae</taxon>
        <taxon>Synechococcales</taxon>
        <taxon>Synechococcaceae</taxon>
        <taxon>Synechococcus</taxon>
    </lineage>
</organism>
<sequence length="504" mass="56167">MSDLRATRLEKALQLRELGFEPYAYRWDCSHSAAQLQALYADLPAGEEVAVEVAIAGRIMARRVFGKLAFFTLQDESGQIQLYLEKQRLSESMAAIDAEAFSHLKALTDVGDILGVKGSVRRTEKGELSIAVDQYAILTKSLQPLPDKWHGLTDVEKRYRQRYVDLIVNPEVRETFRRRAKITAAIRRHLEDQGFIEIETPVLQAEAGGAEARPFITYHNTLELDLYLRIATELHLKRLIVGGFEKVFELGRIFRNEGISTRHNPEFTSIEVYQAYADYEDMMRLTETLIAQVAEQVVGSLQVPYQGQTIDLAPPWKRATMAELVLAATGIDFESLKDLEAGIAAVKAAGIPVPEDCPNLGKLLNHCFEEKVEATLIQPTFVIDYPVEISPLAKPHRSKPGLVERFELFIVGRETANSFSELTDPVDQRQRLEAQAADKAAGNVEANDVDEDFLLALEHGMPPTGGLGIGIDRLVMLLTDSPSIRDVIAFPLLRPEASSEEAEA</sequence>
<feature type="chain" id="PRO_1000059045" description="Lysine--tRNA ligase">
    <location>
        <begin position="1"/>
        <end position="504"/>
    </location>
</feature>
<feature type="binding site" evidence="1">
    <location>
        <position position="407"/>
    </location>
    <ligand>
        <name>Mg(2+)</name>
        <dbReference type="ChEBI" id="CHEBI:18420"/>
        <label>1</label>
    </ligand>
</feature>
<feature type="binding site" evidence="1">
    <location>
        <position position="414"/>
    </location>
    <ligand>
        <name>Mg(2+)</name>
        <dbReference type="ChEBI" id="CHEBI:18420"/>
        <label>1</label>
    </ligand>
</feature>
<feature type="binding site" evidence="1">
    <location>
        <position position="414"/>
    </location>
    <ligand>
        <name>Mg(2+)</name>
        <dbReference type="ChEBI" id="CHEBI:18420"/>
        <label>2</label>
    </ligand>
</feature>
<keyword id="KW-0030">Aminoacyl-tRNA synthetase</keyword>
<keyword id="KW-0067">ATP-binding</keyword>
<keyword id="KW-0963">Cytoplasm</keyword>
<keyword id="KW-0436">Ligase</keyword>
<keyword id="KW-0460">Magnesium</keyword>
<keyword id="KW-0479">Metal-binding</keyword>
<keyword id="KW-0547">Nucleotide-binding</keyword>
<keyword id="KW-0648">Protein biosynthesis</keyword>
<keyword id="KW-1185">Reference proteome</keyword>
<proteinExistence type="inferred from homology"/>
<accession>Q31KH4</accession>
<dbReference type="EC" id="6.1.1.6" evidence="1"/>
<dbReference type="EMBL" id="CP000100">
    <property type="protein sequence ID" value="ABB58445.1"/>
    <property type="molecule type" value="Genomic_DNA"/>
</dbReference>
<dbReference type="RefSeq" id="WP_011244001.1">
    <property type="nucleotide sequence ID" value="NZ_JACJTX010000001.1"/>
</dbReference>
<dbReference type="SMR" id="Q31KH4"/>
<dbReference type="STRING" id="1140.Synpcc7942_2415"/>
<dbReference type="PaxDb" id="1140-Synpcc7942_2415"/>
<dbReference type="GeneID" id="72431304"/>
<dbReference type="KEGG" id="syf:Synpcc7942_2415"/>
<dbReference type="eggNOG" id="COG1190">
    <property type="taxonomic scope" value="Bacteria"/>
</dbReference>
<dbReference type="HOGENOM" id="CLU_008255_6_0_3"/>
<dbReference type="OrthoDB" id="9802326at2"/>
<dbReference type="BioCyc" id="SYNEL:SYNPCC7942_2415-MONOMER"/>
<dbReference type="Proteomes" id="UP000889800">
    <property type="component" value="Chromosome"/>
</dbReference>
<dbReference type="GO" id="GO:0005829">
    <property type="term" value="C:cytosol"/>
    <property type="evidence" value="ECO:0007669"/>
    <property type="project" value="TreeGrafter"/>
</dbReference>
<dbReference type="GO" id="GO:0005524">
    <property type="term" value="F:ATP binding"/>
    <property type="evidence" value="ECO:0007669"/>
    <property type="project" value="UniProtKB-UniRule"/>
</dbReference>
<dbReference type="GO" id="GO:0004824">
    <property type="term" value="F:lysine-tRNA ligase activity"/>
    <property type="evidence" value="ECO:0007669"/>
    <property type="project" value="UniProtKB-UniRule"/>
</dbReference>
<dbReference type="GO" id="GO:0000287">
    <property type="term" value="F:magnesium ion binding"/>
    <property type="evidence" value="ECO:0007669"/>
    <property type="project" value="UniProtKB-UniRule"/>
</dbReference>
<dbReference type="GO" id="GO:0000049">
    <property type="term" value="F:tRNA binding"/>
    <property type="evidence" value="ECO:0007669"/>
    <property type="project" value="TreeGrafter"/>
</dbReference>
<dbReference type="GO" id="GO:0006430">
    <property type="term" value="P:lysyl-tRNA aminoacylation"/>
    <property type="evidence" value="ECO:0007669"/>
    <property type="project" value="UniProtKB-UniRule"/>
</dbReference>
<dbReference type="CDD" id="cd00775">
    <property type="entry name" value="LysRS_core"/>
    <property type="match status" value="1"/>
</dbReference>
<dbReference type="CDD" id="cd04322">
    <property type="entry name" value="LysRS_N"/>
    <property type="match status" value="1"/>
</dbReference>
<dbReference type="FunFam" id="2.40.50.140:FF:000024">
    <property type="entry name" value="Lysine--tRNA ligase"/>
    <property type="match status" value="1"/>
</dbReference>
<dbReference type="FunFam" id="3.30.930.10:FF:000067">
    <property type="entry name" value="Lysine--tRNA ligase"/>
    <property type="match status" value="1"/>
</dbReference>
<dbReference type="Gene3D" id="3.30.930.10">
    <property type="entry name" value="Bira Bifunctional Protein, Domain 2"/>
    <property type="match status" value="1"/>
</dbReference>
<dbReference type="Gene3D" id="2.40.50.140">
    <property type="entry name" value="Nucleic acid-binding proteins"/>
    <property type="match status" value="1"/>
</dbReference>
<dbReference type="HAMAP" id="MF_00252">
    <property type="entry name" value="Lys_tRNA_synth_class2"/>
    <property type="match status" value="1"/>
</dbReference>
<dbReference type="InterPro" id="IPR004364">
    <property type="entry name" value="Aa-tRNA-synt_II"/>
</dbReference>
<dbReference type="InterPro" id="IPR006195">
    <property type="entry name" value="aa-tRNA-synth_II"/>
</dbReference>
<dbReference type="InterPro" id="IPR045864">
    <property type="entry name" value="aa-tRNA-synth_II/BPL/LPL"/>
</dbReference>
<dbReference type="InterPro" id="IPR002313">
    <property type="entry name" value="Lys-tRNA-ligase_II"/>
</dbReference>
<dbReference type="InterPro" id="IPR034762">
    <property type="entry name" value="Lys-tRNA-ligase_II_bac/euk"/>
</dbReference>
<dbReference type="InterPro" id="IPR044136">
    <property type="entry name" value="Lys-tRNA-ligase_II_N"/>
</dbReference>
<dbReference type="InterPro" id="IPR018149">
    <property type="entry name" value="Lys-tRNA-synth_II_C"/>
</dbReference>
<dbReference type="InterPro" id="IPR012340">
    <property type="entry name" value="NA-bd_OB-fold"/>
</dbReference>
<dbReference type="InterPro" id="IPR004365">
    <property type="entry name" value="NA-bd_OB_tRNA"/>
</dbReference>
<dbReference type="NCBIfam" id="TIGR00499">
    <property type="entry name" value="lysS_bact"/>
    <property type="match status" value="1"/>
</dbReference>
<dbReference type="NCBIfam" id="NF001756">
    <property type="entry name" value="PRK00484.1"/>
    <property type="match status" value="1"/>
</dbReference>
<dbReference type="PANTHER" id="PTHR42918:SF15">
    <property type="entry name" value="LYSINE--TRNA LIGASE, CHLOROPLASTIC_MITOCHONDRIAL"/>
    <property type="match status" value="1"/>
</dbReference>
<dbReference type="PANTHER" id="PTHR42918">
    <property type="entry name" value="LYSYL-TRNA SYNTHETASE"/>
    <property type="match status" value="1"/>
</dbReference>
<dbReference type="Pfam" id="PF00152">
    <property type="entry name" value="tRNA-synt_2"/>
    <property type="match status" value="1"/>
</dbReference>
<dbReference type="Pfam" id="PF01336">
    <property type="entry name" value="tRNA_anti-codon"/>
    <property type="match status" value="1"/>
</dbReference>
<dbReference type="PIRSF" id="PIRSF039101">
    <property type="entry name" value="LysRS2"/>
    <property type="match status" value="1"/>
</dbReference>
<dbReference type="PRINTS" id="PR00982">
    <property type="entry name" value="TRNASYNTHLYS"/>
</dbReference>
<dbReference type="SUPFAM" id="SSF55681">
    <property type="entry name" value="Class II aaRS and biotin synthetases"/>
    <property type="match status" value="1"/>
</dbReference>
<dbReference type="SUPFAM" id="SSF50249">
    <property type="entry name" value="Nucleic acid-binding proteins"/>
    <property type="match status" value="1"/>
</dbReference>
<dbReference type="PROSITE" id="PS50862">
    <property type="entry name" value="AA_TRNA_LIGASE_II"/>
    <property type="match status" value="1"/>
</dbReference>
<protein>
    <recommendedName>
        <fullName evidence="1">Lysine--tRNA ligase</fullName>
        <ecNumber evidence="1">6.1.1.6</ecNumber>
    </recommendedName>
    <alternativeName>
        <fullName evidence="1">Lysyl-tRNA synthetase</fullName>
        <shortName evidence="1">LysRS</shortName>
    </alternativeName>
</protein>
<evidence type="ECO:0000255" key="1">
    <source>
        <dbReference type="HAMAP-Rule" id="MF_00252"/>
    </source>
</evidence>
<gene>
    <name evidence="1" type="primary">lysS</name>
    <name type="ordered locus">Synpcc7942_2415</name>
</gene>
<name>SYK_SYNE7</name>
<reference key="1">
    <citation type="submission" date="2005-08" db="EMBL/GenBank/DDBJ databases">
        <title>Complete sequence of chromosome 1 of Synechococcus elongatus PCC 7942.</title>
        <authorList>
            <consortium name="US DOE Joint Genome Institute"/>
            <person name="Copeland A."/>
            <person name="Lucas S."/>
            <person name="Lapidus A."/>
            <person name="Barry K."/>
            <person name="Detter J.C."/>
            <person name="Glavina T."/>
            <person name="Hammon N."/>
            <person name="Israni S."/>
            <person name="Pitluck S."/>
            <person name="Schmutz J."/>
            <person name="Larimer F."/>
            <person name="Land M."/>
            <person name="Kyrpides N."/>
            <person name="Lykidis A."/>
            <person name="Golden S."/>
            <person name="Richardson P."/>
        </authorList>
    </citation>
    <scope>NUCLEOTIDE SEQUENCE [LARGE SCALE GENOMIC DNA]</scope>
    <source>
        <strain>ATCC 33912 / PCC 7942 / FACHB-805</strain>
    </source>
</reference>
<comment type="catalytic activity">
    <reaction evidence="1">
        <text>tRNA(Lys) + L-lysine + ATP = L-lysyl-tRNA(Lys) + AMP + diphosphate</text>
        <dbReference type="Rhea" id="RHEA:20792"/>
        <dbReference type="Rhea" id="RHEA-COMP:9696"/>
        <dbReference type="Rhea" id="RHEA-COMP:9697"/>
        <dbReference type="ChEBI" id="CHEBI:30616"/>
        <dbReference type="ChEBI" id="CHEBI:32551"/>
        <dbReference type="ChEBI" id="CHEBI:33019"/>
        <dbReference type="ChEBI" id="CHEBI:78442"/>
        <dbReference type="ChEBI" id="CHEBI:78529"/>
        <dbReference type="ChEBI" id="CHEBI:456215"/>
        <dbReference type="EC" id="6.1.1.6"/>
    </reaction>
</comment>
<comment type="cofactor">
    <cofactor evidence="1">
        <name>Mg(2+)</name>
        <dbReference type="ChEBI" id="CHEBI:18420"/>
    </cofactor>
    <text evidence="1">Binds 3 Mg(2+) ions per subunit.</text>
</comment>
<comment type="subunit">
    <text evidence="1">Homodimer.</text>
</comment>
<comment type="subcellular location">
    <subcellularLocation>
        <location evidence="1">Cytoplasm</location>
    </subcellularLocation>
</comment>
<comment type="similarity">
    <text evidence="1">Belongs to the class-II aminoacyl-tRNA synthetase family.</text>
</comment>